<comment type="function">
    <text evidence="1">Inhibits insect, but not mammalian, voltage-gated calcium channels (Cav).</text>
</comment>
<comment type="subcellular location">
    <subcellularLocation>
        <location evidence="3 4">Secreted</location>
    </subcellularLocation>
</comment>
<comment type="tissue specificity">
    <text evidence="6 7">Expressed by the venom gland.</text>
</comment>
<comment type="domain">
    <text evidence="5">The presence of a 'disulfide through disulfide knot' structurally defines this protein as a knottin.</text>
</comment>
<comment type="mass spectrometry" mass="4057.0" method="Plasma desorption" evidence="4"/>
<comment type="similarity">
    <text evidence="5">Belongs to the neurotoxin 08 (Shiva) family. 01 (omega toxin) subfamily.</text>
</comment>
<keyword id="KW-0108">Calcium channel impairing toxin</keyword>
<keyword id="KW-0903">Direct protein sequencing</keyword>
<keyword id="KW-1015">Disulfide bond</keyword>
<keyword id="KW-0872">Ion channel impairing toxin</keyword>
<keyword id="KW-0960">Knottin</keyword>
<keyword id="KW-0528">Neurotoxin</keyword>
<keyword id="KW-0964">Secreted</keyword>
<keyword id="KW-0732">Signal</keyword>
<keyword id="KW-0800">Toxin</keyword>
<keyword id="KW-1218">Voltage-gated calcium channel impairing toxin</keyword>
<dbReference type="EMBL" id="HACE01000047">
    <property type="protein sequence ID" value="CDZ18831.1"/>
    <property type="molecule type" value="Transcribed_RNA"/>
</dbReference>
<dbReference type="SMR" id="P0C2L6"/>
<dbReference type="ArachnoServer" id="AS000195">
    <property type="toxin name" value="omega-hexatoxin-Hi1b"/>
</dbReference>
<dbReference type="GO" id="GO:0005576">
    <property type="term" value="C:extracellular region"/>
    <property type="evidence" value="ECO:0007669"/>
    <property type="project" value="UniProtKB-SubCell"/>
</dbReference>
<dbReference type="GO" id="GO:0019855">
    <property type="term" value="F:calcium channel inhibitor activity"/>
    <property type="evidence" value="ECO:0007669"/>
    <property type="project" value="InterPro"/>
</dbReference>
<dbReference type="GO" id="GO:0090729">
    <property type="term" value="F:toxin activity"/>
    <property type="evidence" value="ECO:0007669"/>
    <property type="project" value="UniProtKB-KW"/>
</dbReference>
<dbReference type="GO" id="GO:0006952">
    <property type="term" value="P:defense response"/>
    <property type="evidence" value="ECO:0007669"/>
    <property type="project" value="InterPro"/>
</dbReference>
<dbReference type="InterPro" id="IPR009415">
    <property type="entry name" value="Omega-atracotox"/>
</dbReference>
<dbReference type="Pfam" id="PF06357">
    <property type="entry name" value="Omega-toxin"/>
    <property type="match status" value="1"/>
</dbReference>
<dbReference type="SUPFAM" id="SSF57059">
    <property type="entry name" value="omega toxin-like"/>
    <property type="match status" value="1"/>
</dbReference>
<name>TO1B_HADIN</name>
<reference key="1">
    <citation type="journal article" date="2020" name="Proc. Natl. Acad. Sci. U.S.A.">
        <title>Structural venomics reveals evolution of a complex venom by duplication and diversification of an ancient peptide-encoding gene.</title>
        <authorList>
            <person name="Pineda S.S."/>
            <person name="Chin Y.K."/>
            <person name="Undheim E.A.B."/>
            <person name="Senff S."/>
            <person name="Mobli M."/>
            <person name="Dauly C."/>
            <person name="Escoubas P."/>
            <person name="Nicholson G.M."/>
            <person name="Kaas Q."/>
            <person name="Guo S."/>
            <person name="Herzig V."/>
            <person name="Mattick J.S."/>
            <person name="King G.F."/>
        </authorList>
    </citation>
    <scope>NUCLEOTIDE SEQUENCE [MRNA]</scope>
    <scope>IDENTIFICATION BY MASS SPECTROMETRY</scope>
    <scope>SUBCELLULAR LOCATION</scope>
    <source>
        <tissue>Venom</tissue>
        <tissue>Venom gland</tissue>
    </source>
</reference>
<reference evidence="8" key="2">
    <citation type="thesis" date="2012" institute="The University of Queensland" country="Australia">
        <title>Probing the chemical diversity of venom from the Australian Funnel-web spider Hadronyche infensa.</title>
        <authorList>
            <person name="Pineda S.S."/>
        </authorList>
    </citation>
    <scope>NUCLEOTIDE SEQUENCE [MRNA]</scope>
    <source>
        <tissue>Venom gland</tissue>
    </source>
</reference>
<reference evidence="8" key="3">
    <citation type="submission" date="2014-07" db="EMBL/GenBank/DDBJ databases">
        <authorList>
            <person name="Zhang J.E."/>
            <person name="Yang H."/>
            <person name="Guo J."/>
            <person name="Deng Z."/>
            <person name="Luo H."/>
            <person name="Luo M."/>
            <person name="Zhao B."/>
        </authorList>
    </citation>
    <scope>NUCLEOTIDE SEQUENCE [MRNA]</scope>
    <source>
        <tissue>Venom gland</tissue>
    </source>
</reference>
<reference key="4">
    <citation type="patent" date="1998-06-09" number="US5763568">
        <title>Insecticidal toxins derived from funnel web (Atrax or Hadronyche) spiders.</title>
        <authorList>
            <person name="Atkinson R.K."/>
            <person name="Howden M.E.H."/>
            <person name="Tyler M.I."/>
            <person name="Vonarx E.J."/>
        </authorList>
    </citation>
    <scope>PROTEIN SEQUENCE OF 43-79</scope>
    <scope>MASS SPECTROMETRY</scope>
    <scope>SUBCELLULAR LOCATION</scope>
</reference>
<proteinExistence type="evidence at protein level"/>
<sequence length="79" mass="8717">MNTATGFIVLLVLATVIGCISADFQGGFEPYEEEDAERIFRRSPTCIPTGQPCPYNENCCSQSCTYKANENGNQVKRCD</sequence>
<accession>P0C2L6</accession>
<accession>A0A1D0BZY4</accession>
<protein>
    <recommendedName>
        <fullName>Omega-hexatoxin-Hi1b</fullName>
        <shortName>Omega-HXTX-Hi1b</shortName>
    </recommendedName>
    <alternativeName>
        <fullName>Omega-atracotoxin-Hi1b</fullName>
        <shortName>AcTx-Hi1</shortName>
        <shortName>Omega-AcTx-Hi1b</shortName>
    </alternativeName>
</protein>
<feature type="signal peptide" evidence="2">
    <location>
        <begin position="1"/>
        <end position="22"/>
    </location>
</feature>
<feature type="propeptide" id="PRO_0000459663" evidence="5">
    <location>
        <begin position="23"/>
        <end position="42"/>
    </location>
</feature>
<feature type="peptide" id="PRO_0000280459" description="Omega-hexatoxin-Hi1b" evidence="4">
    <location>
        <begin position="43"/>
        <end position="79"/>
    </location>
</feature>
<feature type="site" description="Critical for insecticidal activity" evidence="1">
    <location>
        <position position="52"/>
    </location>
</feature>
<feature type="site" description="Critical for insecticidal activity" evidence="1">
    <location>
        <position position="69"/>
    </location>
</feature>
<feature type="site" description="Critical for insecticidal activity" evidence="1">
    <location>
        <position position="77"/>
    </location>
</feature>
<feature type="disulfide bond" evidence="1">
    <location>
        <begin position="46"/>
        <end position="60"/>
    </location>
</feature>
<feature type="disulfide bond" evidence="1">
    <location>
        <begin position="53"/>
        <end position="64"/>
    </location>
</feature>
<feature type="disulfide bond" evidence="1">
    <location>
        <begin position="59"/>
        <end position="78"/>
    </location>
</feature>
<organism>
    <name type="scientific">Hadronyche infensa</name>
    <name type="common">Fraser island funnel-web spider</name>
    <name type="synonym">Atrax infensus</name>
    <dbReference type="NCBI Taxonomy" id="153481"/>
    <lineage>
        <taxon>Eukaryota</taxon>
        <taxon>Metazoa</taxon>
        <taxon>Ecdysozoa</taxon>
        <taxon>Arthropoda</taxon>
        <taxon>Chelicerata</taxon>
        <taxon>Arachnida</taxon>
        <taxon>Araneae</taxon>
        <taxon>Mygalomorphae</taxon>
        <taxon>Hexathelidae</taxon>
        <taxon>Hadronyche</taxon>
    </lineage>
</organism>
<evidence type="ECO:0000250" key="1">
    <source>
        <dbReference type="UniProtKB" id="P56207"/>
    </source>
</evidence>
<evidence type="ECO:0000255" key="2"/>
<evidence type="ECO:0000269" key="3">
    <source>
    </source>
</evidence>
<evidence type="ECO:0000269" key="4">
    <source ref="4"/>
</evidence>
<evidence type="ECO:0000305" key="5"/>
<evidence type="ECO:0000305" key="6">
    <source>
    </source>
</evidence>
<evidence type="ECO:0000305" key="7">
    <source ref="4"/>
</evidence>
<evidence type="ECO:0000312" key="8">
    <source>
        <dbReference type="EMBL" id="CDZ18831.1"/>
    </source>
</evidence>